<dbReference type="EC" id="2.7.7.2" evidence="3"/>
<dbReference type="EMBL" id="DQ458779">
    <property type="protein sequence ID" value="ABE65383.1"/>
    <property type="molecule type" value="mRNA"/>
</dbReference>
<dbReference type="EMBL" id="AF481877">
    <property type="protein sequence ID" value="AAO49318.1"/>
    <property type="molecule type" value="mRNA"/>
</dbReference>
<dbReference type="EMBL" id="AF520568">
    <property type="protein sequence ID" value="AAM77338.1"/>
    <property type="molecule type" value="mRNA"/>
</dbReference>
<dbReference type="EMBL" id="AF218022">
    <property type="protein sequence ID" value="AAG17264.1"/>
    <property type="molecule type" value="mRNA"/>
</dbReference>
<dbReference type="EMBL" id="AL451085">
    <property type="status" value="NOT_ANNOTATED_CDS"/>
    <property type="molecule type" value="Genomic_DNA"/>
</dbReference>
<dbReference type="EMBL" id="CH471121">
    <property type="protein sequence ID" value="EAW53154.1"/>
    <property type="molecule type" value="Genomic_DNA"/>
</dbReference>
<dbReference type="EMBL" id="CH471121">
    <property type="protein sequence ID" value="EAW53155.1"/>
    <property type="molecule type" value="Genomic_DNA"/>
</dbReference>
<dbReference type="EMBL" id="CH471121">
    <property type="protein sequence ID" value="EAW53158.1"/>
    <property type="molecule type" value="Genomic_DNA"/>
</dbReference>
<dbReference type="EMBL" id="CH471121">
    <property type="protein sequence ID" value="EAW53159.1"/>
    <property type="molecule type" value="Genomic_DNA"/>
</dbReference>
<dbReference type="EMBL" id="BC011378">
    <property type="protein sequence ID" value="AAH11378.1"/>
    <property type="molecule type" value="mRNA"/>
</dbReference>
<dbReference type="EMBL" id="BC014012">
    <property type="protein sequence ID" value="AAH14012.2"/>
    <property type="molecule type" value="mRNA"/>
</dbReference>
<dbReference type="EMBL" id="BC020253">
    <property type="protein sequence ID" value="AAH20253.1"/>
    <property type="molecule type" value="mRNA"/>
</dbReference>
<dbReference type="EMBL" id="BC021096">
    <property type="protein sequence ID" value="AAH21096.2"/>
    <property type="molecule type" value="mRNA"/>
</dbReference>
<dbReference type="EMBL" id="BC032323">
    <property type="protein sequence ID" value="AAH32323.1"/>
    <property type="molecule type" value="mRNA"/>
</dbReference>
<dbReference type="EMBL" id="U79241">
    <property type="protein sequence ID" value="AAB50199.1"/>
    <property type="molecule type" value="mRNA"/>
</dbReference>
<dbReference type="CCDS" id="CCDS1078.1">
    <molecule id="Q8NFF5-1"/>
</dbReference>
<dbReference type="CCDS" id="CCDS1079.1">
    <molecule id="Q8NFF5-2"/>
</dbReference>
<dbReference type="CCDS" id="CCDS53371.1">
    <molecule id="Q8NFF5-3"/>
</dbReference>
<dbReference type="CCDS" id="CCDS53372.1">
    <molecule id="Q8NFF5-4"/>
</dbReference>
<dbReference type="RefSeq" id="NP_001171820.1">
    <molecule id="Q8NFF5-3"/>
    <property type="nucleotide sequence ID" value="NM_001184891.2"/>
</dbReference>
<dbReference type="RefSeq" id="NP_001171821.1">
    <molecule id="Q8NFF5-4"/>
    <property type="nucleotide sequence ID" value="NM_001184892.2"/>
</dbReference>
<dbReference type="RefSeq" id="NP_079483.3">
    <molecule id="Q8NFF5-1"/>
    <property type="nucleotide sequence ID" value="NM_025207.4"/>
</dbReference>
<dbReference type="RefSeq" id="NP_958800.1">
    <molecule id="Q8NFF5-2"/>
    <property type="nucleotide sequence ID" value="NM_201398.3"/>
</dbReference>
<dbReference type="PDB" id="8ROM">
    <property type="method" value="X-ray"/>
    <property type="resolution" value="1.69 A"/>
    <property type="chains" value="A=355-553"/>
</dbReference>
<dbReference type="PDB" id="8RON">
    <property type="method" value="X-ray"/>
    <property type="resolution" value="2.60 A"/>
    <property type="chains" value="A/B/C/D=110-587"/>
</dbReference>
<dbReference type="PDBsum" id="8ROM"/>
<dbReference type="PDBsum" id="8RON"/>
<dbReference type="SMR" id="Q8NFF5"/>
<dbReference type="BioGRID" id="123221">
    <property type="interactions" value="126"/>
</dbReference>
<dbReference type="FunCoup" id="Q8NFF5">
    <property type="interactions" value="1107"/>
</dbReference>
<dbReference type="IntAct" id="Q8NFF5">
    <property type="interactions" value="55"/>
</dbReference>
<dbReference type="MINT" id="Q8NFF5"/>
<dbReference type="STRING" id="9606.ENSP00000292180"/>
<dbReference type="ChEMBL" id="CHEMBL3879869"/>
<dbReference type="GlyGen" id="Q8NFF5">
    <property type="glycosylation" value="1 site, 1 O-linked glycan (1 site)"/>
</dbReference>
<dbReference type="iPTMnet" id="Q8NFF5"/>
<dbReference type="PhosphoSitePlus" id="Q8NFF5"/>
<dbReference type="SwissPalm" id="Q8NFF5"/>
<dbReference type="BioMuta" id="FLAD1"/>
<dbReference type="DMDM" id="74751275"/>
<dbReference type="jPOST" id="Q8NFF5"/>
<dbReference type="MassIVE" id="Q8NFF5"/>
<dbReference type="PaxDb" id="9606-ENSP00000292180"/>
<dbReference type="PeptideAtlas" id="Q8NFF5"/>
<dbReference type="ProteomicsDB" id="73297">
    <molecule id="Q8NFF5-1"/>
</dbReference>
<dbReference type="ProteomicsDB" id="73298">
    <molecule id="Q8NFF5-2"/>
</dbReference>
<dbReference type="ProteomicsDB" id="73299">
    <molecule id="Q8NFF5-3"/>
</dbReference>
<dbReference type="ProteomicsDB" id="73300">
    <molecule id="Q8NFF5-4"/>
</dbReference>
<dbReference type="ProteomicsDB" id="73301">
    <molecule id="Q8NFF5-5"/>
</dbReference>
<dbReference type="Pumba" id="Q8NFF5"/>
<dbReference type="Antibodypedia" id="34162">
    <property type="antibodies" value="147 antibodies from 24 providers"/>
</dbReference>
<dbReference type="DNASU" id="80308"/>
<dbReference type="Ensembl" id="ENST00000292180.8">
    <molecule id="Q8NFF5-1"/>
    <property type="protein sequence ID" value="ENSP00000292180.3"/>
    <property type="gene ID" value="ENSG00000160688.19"/>
</dbReference>
<dbReference type="Ensembl" id="ENST00000315144.14">
    <molecule id="Q8NFF5-2"/>
    <property type="protein sequence ID" value="ENSP00000317296.10"/>
    <property type="gene ID" value="ENSG00000160688.19"/>
</dbReference>
<dbReference type="Ensembl" id="ENST00000368431.7">
    <molecule id="Q8NFF5-4"/>
    <property type="protein sequence ID" value="ENSP00000357416.3"/>
    <property type="gene ID" value="ENSG00000160688.19"/>
</dbReference>
<dbReference type="Ensembl" id="ENST00000368432.5">
    <molecule id="Q8NFF5-3"/>
    <property type="protein sequence ID" value="ENSP00000357417.1"/>
    <property type="gene ID" value="ENSG00000160688.19"/>
</dbReference>
<dbReference type="GeneID" id="80308"/>
<dbReference type="KEGG" id="hsa:80308"/>
<dbReference type="MANE-Select" id="ENST00000292180.8">
    <property type="protein sequence ID" value="ENSP00000292180.3"/>
    <property type="RefSeq nucleotide sequence ID" value="NM_025207.5"/>
    <property type="RefSeq protein sequence ID" value="NP_079483.3"/>
</dbReference>
<dbReference type="UCSC" id="uc001fgc.4">
    <molecule id="Q8NFF5-1"/>
    <property type="organism name" value="human"/>
</dbReference>
<dbReference type="AGR" id="HGNC:24671"/>
<dbReference type="CTD" id="80308"/>
<dbReference type="DisGeNET" id="80308"/>
<dbReference type="GeneCards" id="FLAD1"/>
<dbReference type="HGNC" id="HGNC:24671">
    <property type="gene designation" value="FLAD1"/>
</dbReference>
<dbReference type="HPA" id="ENSG00000160688">
    <property type="expression patterns" value="Low tissue specificity"/>
</dbReference>
<dbReference type="MalaCards" id="FLAD1"/>
<dbReference type="MIM" id="255100">
    <property type="type" value="phenotype"/>
</dbReference>
<dbReference type="MIM" id="610595">
    <property type="type" value="gene"/>
</dbReference>
<dbReference type="neXtProt" id="NX_Q8NFF5"/>
<dbReference type="OpenTargets" id="ENSG00000160688"/>
<dbReference type="Orphanet" id="394532">
    <property type="disease" value="Multiple acyl-CoA dehydrogenase deficiency, mild type"/>
</dbReference>
<dbReference type="Orphanet" id="394529">
    <property type="disease" value="Multiple acyl-CoA dehydrogenase deficiency, severe neonatal type"/>
</dbReference>
<dbReference type="PharmGKB" id="PA142671759"/>
<dbReference type="VEuPathDB" id="HostDB:ENSG00000160688"/>
<dbReference type="eggNOG" id="KOG2644">
    <property type="taxonomic scope" value="Eukaryota"/>
</dbReference>
<dbReference type="GeneTree" id="ENSGT00390000007266"/>
<dbReference type="HOGENOM" id="CLU_030805_8_0_1"/>
<dbReference type="InParanoid" id="Q8NFF5"/>
<dbReference type="OMA" id="EGWAPGC"/>
<dbReference type="OrthoDB" id="270728at2759"/>
<dbReference type="PAN-GO" id="Q8NFF5">
    <property type="GO annotations" value="2 GO annotations based on evolutionary models"/>
</dbReference>
<dbReference type="PhylomeDB" id="Q8NFF5"/>
<dbReference type="TreeFam" id="TF314056"/>
<dbReference type="BioCyc" id="MetaCyc:HS08520-MONOMER"/>
<dbReference type="BRENDA" id="2.7.7.2">
    <property type="organism ID" value="2681"/>
</dbReference>
<dbReference type="PathwayCommons" id="Q8NFF5"/>
<dbReference type="Reactome" id="R-HSA-196843">
    <property type="pathway name" value="Vitamin B2 (riboflavin) metabolism"/>
</dbReference>
<dbReference type="SABIO-RK" id="Q8NFF5"/>
<dbReference type="SignaLink" id="Q8NFF5"/>
<dbReference type="UniPathway" id="UPA00277">
    <property type="reaction ID" value="UER00407"/>
</dbReference>
<dbReference type="BioGRID-ORCS" id="80308">
    <property type="hits" value="32 hits in 1160 CRISPR screens"/>
</dbReference>
<dbReference type="ChiTaRS" id="FLAD1">
    <property type="organism name" value="human"/>
</dbReference>
<dbReference type="GenomeRNAi" id="80308"/>
<dbReference type="Pharos" id="Q8NFF5">
    <property type="development level" value="Tbio"/>
</dbReference>
<dbReference type="PRO" id="PR:Q8NFF5"/>
<dbReference type="Proteomes" id="UP000005640">
    <property type="component" value="Chromosome 1"/>
</dbReference>
<dbReference type="RNAct" id="Q8NFF5">
    <property type="molecule type" value="protein"/>
</dbReference>
<dbReference type="Bgee" id="ENSG00000160688">
    <property type="expression patterns" value="Expressed in apex of heart and 173 other cell types or tissues"/>
</dbReference>
<dbReference type="ExpressionAtlas" id="Q8NFF5">
    <property type="expression patterns" value="baseline and differential"/>
</dbReference>
<dbReference type="GO" id="GO:0005829">
    <property type="term" value="C:cytosol"/>
    <property type="evidence" value="ECO:0000314"/>
    <property type="project" value="HPA"/>
</dbReference>
<dbReference type="GO" id="GO:0005759">
    <property type="term" value="C:mitochondrial matrix"/>
    <property type="evidence" value="ECO:0000314"/>
    <property type="project" value="FlyBase"/>
</dbReference>
<dbReference type="GO" id="GO:0005739">
    <property type="term" value="C:mitochondrion"/>
    <property type="evidence" value="ECO:0006056"/>
    <property type="project" value="FlyBase"/>
</dbReference>
<dbReference type="GO" id="GO:0005886">
    <property type="term" value="C:plasma membrane"/>
    <property type="evidence" value="ECO:0000314"/>
    <property type="project" value="HPA"/>
</dbReference>
<dbReference type="GO" id="GO:0005524">
    <property type="term" value="F:ATP binding"/>
    <property type="evidence" value="ECO:0007669"/>
    <property type="project" value="UniProtKB-KW"/>
</dbReference>
<dbReference type="GO" id="GO:0003919">
    <property type="term" value="F:FMN adenylyltransferase activity"/>
    <property type="evidence" value="ECO:0000314"/>
    <property type="project" value="FlyBase"/>
</dbReference>
<dbReference type="GO" id="GO:0042802">
    <property type="term" value="F:identical protein binding"/>
    <property type="evidence" value="ECO:0000353"/>
    <property type="project" value="IntAct"/>
</dbReference>
<dbReference type="GO" id="GO:0006747">
    <property type="term" value="P:FAD biosynthetic process"/>
    <property type="evidence" value="ECO:0000314"/>
    <property type="project" value="FlyBase"/>
</dbReference>
<dbReference type="GO" id="GO:0006771">
    <property type="term" value="P:riboflavin metabolic process"/>
    <property type="evidence" value="ECO:0000304"/>
    <property type="project" value="Reactome"/>
</dbReference>
<dbReference type="CDD" id="cd00885">
    <property type="entry name" value="cinA"/>
    <property type="match status" value="1"/>
</dbReference>
<dbReference type="CDD" id="cd23948">
    <property type="entry name" value="FAD_synthase"/>
    <property type="match status" value="1"/>
</dbReference>
<dbReference type="FunFam" id="3.40.50.620:FF:000113">
    <property type="entry name" value="FAD synthase"/>
    <property type="match status" value="1"/>
</dbReference>
<dbReference type="FunFam" id="3.40.980.10:FF:000007">
    <property type="entry name" value="FAD synthase"/>
    <property type="match status" value="1"/>
</dbReference>
<dbReference type="Gene3D" id="3.40.50.620">
    <property type="entry name" value="HUPs"/>
    <property type="match status" value="1"/>
</dbReference>
<dbReference type="Gene3D" id="3.40.980.10">
    <property type="entry name" value="MoaB/Mog-like domain"/>
    <property type="match status" value="1"/>
</dbReference>
<dbReference type="InterPro" id="IPR012183">
    <property type="entry name" value="FAD_synth_MoaB/Mog-bd"/>
</dbReference>
<dbReference type="InterPro" id="IPR056596">
    <property type="entry name" value="FLAD1_M"/>
</dbReference>
<dbReference type="InterPro" id="IPR036425">
    <property type="entry name" value="MoaB/Mog-like_dom_sf"/>
</dbReference>
<dbReference type="InterPro" id="IPR001453">
    <property type="entry name" value="MoaB/Mog_dom"/>
</dbReference>
<dbReference type="InterPro" id="IPR002500">
    <property type="entry name" value="PAPS_reduct_dom"/>
</dbReference>
<dbReference type="InterPro" id="IPR014729">
    <property type="entry name" value="Rossmann-like_a/b/a_fold"/>
</dbReference>
<dbReference type="PANTHER" id="PTHR23293:SF9">
    <property type="entry name" value="FAD SYNTHASE"/>
    <property type="match status" value="1"/>
</dbReference>
<dbReference type="PANTHER" id="PTHR23293">
    <property type="entry name" value="FAD SYNTHETASE-RELATED FMN ADENYLYLTRANSFERASE"/>
    <property type="match status" value="1"/>
</dbReference>
<dbReference type="Pfam" id="PF24102">
    <property type="entry name" value="FLAD1_M"/>
    <property type="match status" value="1"/>
</dbReference>
<dbReference type="Pfam" id="PF00994">
    <property type="entry name" value="MoCF_biosynth"/>
    <property type="match status" value="1"/>
</dbReference>
<dbReference type="Pfam" id="PF01507">
    <property type="entry name" value="PAPS_reduct"/>
    <property type="match status" value="1"/>
</dbReference>
<dbReference type="PIRSF" id="PIRSF036620">
    <property type="entry name" value="MPTbdFAD"/>
    <property type="match status" value="1"/>
</dbReference>
<dbReference type="SMART" id="SM00852">
    <property type="entry name" value="MoCF_biosynth"/>
    <property type="match status" value="1"/>
</dbReference>
<dbReference type="SUPFAM" id="SSF52402">
    <property type="entry name" value="Adenine nucleotide alpha hydrolases-like"/>
    <property type="match status" value="1"/>
</dbReference>
<dbReference type="SUPFAM" id="SSF53218">
    <property type="entry name" value="Molybdenum cofactor biosynthesis proteins"/>
    <property type="match status" value="1"/>
</dbReference>
<feature type="transit peptide" description="Mitochondrion" evidence="2">
    <location>
        <begin position="1"/>
        <end position="17"/>
    </location>
</feature>
<feature type="chain" id="PRO_0000302737" description="FAD synthase">
    <location>
        <begin position="18"/>
        <end position="587"/>
    </location>
</feature>
<feature type="region of interest" description="Molybdenum cofactor biosynthesis protein-like">
    <location>
        <begin position="114"/>
        <end position="205"/>
    </location>
</feature>
<feature type="region of interest" description="FAD synthase">
    <location>
        <begin position="398"/>
        <end position="555"/>
    </location>
</feature>
<feature type="modified residue" description="Phosphoserine" evidence="12 13">
    <location>
        <position position="106"/>
    </location>
</feature>
<feature type="modified residue" description="N6-acetyllysine; alternate" evidence="1">
    <location>
        <position position="378"/>
    </location>
</feature>
<feature type="modified residue" description="N6-succinyllysine; alternate" evidence="1">
    <location>
        <position position="378"/>
    </location>
</feature>
<feature type="modified residue" description="Phosphoserine" evidence="13 14 15">
    <location>
        <position position="563"/>
    </location>
</feature>
<feature type="splice variant" id="VSP_027947" description="In isoform 2 and isoform 3." evidence="7 10">
    <location>
        <begin position="1"/>
        <end position="97"/>
    </location>
</feature>
<feature type="splice variant" id="VSP_027948" description="In isoform 4 and isoform 5." evidence="7 8">
    <location>
        <begin position="1"/>
        <end position="30"/>
    </location>
</feature>
<feature type="splice variant" id="VSP_027949" description="In isoform 4 and isoform 5." evidence="7 8">
    <original>LEGSTRTPALPHCLFWLLQVPSTQDPLFPGYGPQCPVDLAGPPCLRPLFGGLGGYWRALQRGREGRTMTSRASELSPGRSVTAGIIIVGDEILK</original>
    <variation>MQPSSSTPPLHPYSTDGLIFPFNPQ</variation>
    <location>
        <begin position="31"/>
        <end position="124"/>
    </location>
</feature>
<feature type="splice variant" id="VSP_027950" description="In isoform 5." evidence="7">
    <original>SSLGKKVAGALQTIETSLAQYSLTQLCVGFNGGKDCTALLHLFHAAVQRKLPDVPNPLQILYIR</original>
    <variation>NYLMFQTPSRSCISAASPLSLSWNSFYRTLSREQAIPENQIASPPSEAKGAEEPWMGPFPGQQG</variation>
    <location>
        <begin position="374"/>
        <end position="437"/>
    </location>
</feature>
<feature type="splice variant" id="VSP_027951" description="In isoform 4." evidence="8">
    <original>SSLGKKVAGALQTIETSLAQ</original>
    <variation>RDLMEEGHYAQSHWWHPRSQ</variation>
    <location>
        <begin position="374"/>
        <end position="393"/>
    </location>
</feature>
<feature type="splice variant" id="VSP_027952" description="In isoform 4." evidence="8">
    <location>
        <begin position="394"/>
        <end position="587"/>
    </location>
</feature>
<feature type="splice variant" id="VSP_027953" description="In isoform 5." evidence="7">
    <location>
        <begin position="438"/>
        <end position="587"/>
    </location>
</feature>
<feature type="splice variant" id="VSP_027954" description="In isoform 3." evidence="7">
    <location>
        <begin position="544"/>
        <end position="587"/>
    </location>
</feature>
<feature type="sequence variant" id="VAR_077069" description="In dbSNP:rs773925274." evidence="6">
    <original>P</original>
    <variation>L</variation>
    <location>
        <position position="107"/>
    </location>
</feature>
<feature type="sequence variant" id="VAR_077070" description="In LSMFLAD; decreased protein stability; decreased affinity for FMN; reduced Vmax; decreased FMN adenylyltransferase activity; dbSNP:rs771466122." evidence="6">
    <original>R</original>
    <variation>C</variation>
    <location>
        <position position="530"/>
    </location>
</feature>
<feature type="strand" evidence="17">
    <location>
        <begin position="112"/>
        <end position="118"/>
    </location>
</feature>
<feature type="helix" evidence="17">
    <location>
        <begin position="120"/>
        <end position="124"/>
    </location>
</feature>
<feature type="helix" evidence="17">
    <location>
        <begin position="131"/>
        <end position="141"/>
    </location>
</feature>
<feature type="strand" evidence="17">
    <location>
        <begin position="145"/>
        <end position="152"/>
    </location>
</feature>
<feature type="helix" evidence="17">
    <location>
        <begin position="156"/>
        <end position="169"/>
    </location>
</feature>
<feature type="strand" evidence="17">
    <location>
        <begin position="171"/>
        <end position="177"/>
    </location>
</feature>
<feature type="strand" evidence="17">
    <location>
        <begin position="180"/>
        <end position="182"/>
    </location>
</feature>
<feature type="helix" evidence="17">
    <location>
        <begin position="187"/>
        <end position="194"/>
    </location>
</feature>
<feature type="strand" evidence="17">
    <location>
        <begin position="199"/>
        <end position="201"/>
    </location>
</feature>
<feature type="helix" evidence="17">
    <location>
        <begin position="203"/>
        <end position="211"/>
    </location>
</feature>
<feature type="helix" evidence="17">
    <location>
        <begin position="218"/>
        <end position="221"/>
    </location>
</feature>
<feature type="strand" evidence="17">
    <location>
        <begin position="222"/>
        <end position="224"/>
    </location>
</feature>
<feature type="strand" evidence="17">
    <location>
        <begin position="228"/>
        <end position="230"/>
    </location>
</feature>
<feature type="turn" evidence="17">
    <location>
        <begin position="235"/>
        <end position="237"/>
    </location>
</feature>
<feature type="strand" evidence="17">
    <location>
        <begin position="238"/>
        <end position="240"/>
    </location>
</feature>
<feature type="strand" evidence="17">
    <location>
        <begin position="245"/>
        <end position="248"/>
    </location>
</feature>
<feature type="strand" evidence="17">
    <location>
        <begin position="251"/>
        <end position="254"/>
    </location>
</feature>
<feature type="helix" evidence="17">
    <location>
        <begin position="258"/>
        <end position="268"/>
    </location>
</feature>
<feature type="helix" evidence="17">
    <location>
        <begin position="269"/>
        <end position="272"/>
    </location>
</feature>
<feature type="strand" evidence="17">
    <location>
        <begin position="280"/>
        <end position="288"/>
    </location>
</feature>
<feature type="helix" evidence="17">
    <location>
        <begin position="290"/>
        <end position="304"/>
    </location>
</feature>
<feature type="strand" evidence="17">
    <location>
        <begin position="309"/>
        <end position="314"/>
    </location>
</feature>
<feature type="strand" evidence="17">
    <location>
        <begin position="322"/>
        <end position="332"/>
    </location>
</feature>
<feature type="helix" evidence="17">
    <location>
        <begin position="333"/>
        <end position="345"/>
    </location>
</feature>
<feature type="turn" evidence="16">
    <location>
        <begin position="358"/>
        <end position="361"/>
    </location>
</feature>
<feature type="helix" evidence="16">
    <location>
        <begin position="362"/>
        <end position="370"/>
    </location>
</feature>
<feature type="strand" evidence="17">
    <location>
        <begin position="372"/>
        <end position="374"/>
    </location>
</feature>
<feature type="helix" evidence="16">
    <location>
        <begin position="375"/>
        <end position="393"/>
    </location>
</feature>
<feature type="turn" evidence="16">
    <location>
        <begin position="396"/>
        <end position="398"/>
    </location>
</feature>
<feature type="strand" evidence="16">
    <location>
        <begin position="399"/>
        <end position="402"/>
    </location>
</feature>
<feature type="helix" evidence="16">
    <location>
        <begin position="407"/>
        <end position="423"/>
    </location>
</feature>
<feature type="strand" evidence="17">
    <location>
        <begin position="425"/>
        <end position="427"/>
    </location>
</feature>
<feature type="strand" evidence="16">
    <location>
        <begin position="432"/>
        <end position="437"/>
    </location>
</feature>
<feature type="helix" evidence="16">
    <location>
        <begin position="443"/>
        <end position="456"/>
    </location>
</feature>
<feature type="strand" evidence="16">
    <location>
        <begin position="459"/>
        <end position="466"/>
    </location>
</feature>
<feature type="helix" evidence="16">
    <location>
        <begin position="467"/>
        <end position="477"/>
    </location>
</feature>
<feature type="strand" evidence="16">
    <location>
        <begin position="483"/>
        <end position="485"/>
    </location>
</feature>
<feature type="helix" evidence="16">
    <location>
        <begin position="493"/>
        <end position="496"/>
    </location>
</feature>
<feature type="strand" evidence="16">
    <location>
        <begin position="500"/>
        <end position="503"/>
    </location>
</feature>
<feature type="strand" evidence="17">
    <location>
        <begin position="506"/>
        <end position="508"/>
    </location>
</feature>
<feature type="strand" evidence="16">
    <location>
        <begin position="512"/>
        <end position="514"/>
    </location>
</feature>
<feature type="turn" evidence="16">
    <location>
        <begin position="516"/>
        <end position="519"/>
    </location>
</feature>
<feature type="helix" evidence="16">
    <location>
        <begin position="522"/>
        <end position="531"/>
    </location>
</feature>
<feature type="helix" evidence="16">
    <location>
        <begin position="538"/>
        <end position="541"/>
    </location>
</feature>
<feature type="turn" evidence="17">
    <location>
        <begin position="550"/>
        <end position="552"/>
    </location>
</feature>
<feature type="helix" evidence="17">
    <location>
        <begin position="579"/>
        <end position="584"/>
    </location>
</feature>
<evidence type="ECO:0000250" key="1">
    <source>
        <dbReference type="UniProtKB" id="Q8R123"/>
    </source>
</evidence>
<evidence type="ECO:0000255" key="2"/>
<evidence type="ECO:0000269" key="3">
    <source>
    </source>
</evidence>
<evidence type="ECO:0000269" key="4">
    <source>
    </source>
</evidence>
<evidence type="ECO:0000269" key="5">
    <source>
    </source>
</evidence>
<evidence type="ECO:0000269" key="6">
    <source>
    </source>
</evidence>
<evidence type="ECO:0000303" key="7">
    <source>
    </source>
</evidence>
<evidence type="ECO:0000303" key="8">
    <source>
    </source>
</evidence>
<evidence type="ECO:0000303" key="9">
    <source>
    </source>
</evidence>
<evidence type="ECO:0000303" key="10">
    <source ref="2"/>
</evidence>
<evidence type="ECO:0000305" key="11"/>
<evidence type="ECO:0007744" key="12">
    <source>
    </source>
</evidence>
<evidence type="ECO:0007744" key="13">
    <source>
    </source>
</evidence>
<evidence type="ECO:0007744" key="14">
    <source>
    </source>
</evidence>
<evidence type="ECO:0007744" key="15">
    <source>
    </source>
</evidence>
<evidence type="ECO:0007829" key="16">
    <source>
        <dbReference type="PDB" id="8ROM"/>
    </source>
</evidence>
<evidence type="ECO:0007829" key="17">
    <source>
        <dbReference type="PDB" id="8RON"/>
    </source>
</evidence>
<organism>
    <name type="scientific">Homo sapiens</name>
    <name type="common">Human</name>
    <dbReference type="NCBI Taxonomy" id="9606"/>
    <lineage>
        <taxon>Eukaryota</taxon>
        <taxon>Metazoa</taxon>
        <taxon>Chordata</taxon>
        <taxon>Craniata</taxon>
        <taxon>Vertebrata</taxon>
        <taxon>Euteleostomi</taxon>
        <taxon>Mammalia</taxon>
        <taxon>Eutheria</taxon>
        <taxon>Euarchontoglires</taxon>
        <taxon>Primates</taxon>
        <taxon>Haplorrhini</taxon>
        <taxon>Catarrhini</taxon>
        <taxon>Hominidae</taxon>
        <taxon>Homo</taxon>
    </lineage>
</organism>
<accession>Q8NFF5</accession>
<accession>Q8N5J1</accession>
<accession>Q8N686</accession>
<accession>Q8WU93</accession>
<accession>Q8WUJ4</accession>
<accession>Q96CR8</accession>
<accession>Q99764</accession>
<accession>Q9HBN6</accession>
<proteinExistence type="evidence at protein level"/>
<protein>
    <recommendedName>
        <fullName>FAD synthase</fullName>
        <ecNumber evidence="3">2.7.7.2</ecNumber>
    </recommendedName>
    <alternativeName>
        <fullName>FAD pyrophosphorylase</fullName>
    </alternativeName>
    <alternativeName>
        <fullName>FMN adenylyltransferase</fullName>
    </alternativeName>
    <alternativeName>
        <fullName>Flavin adenine dinucleotide synthase</fullName>
    </alternativeName>
    <domain>
        <recommendedName>
            <fullName>Molybdenum cofactor biosynthesis protein-like region</fullName>
        </recommendedName>
    </domain>
    <domain>
        <recommendedName>
            <fullName>FAD synthase region</fullName>
        </recommendedName>
    </domain>
</protein>
<comment type="function">
    <text evidence="3 6">Catalyzes the adenylation of flavin mononucleotide (FMN) to form flavin adenine dinucleotide (FAD) coenzyme.</text>
</comment>
<comment type="catalytic activity">
    <reaction evidence="3">
        <text>FMN + ATP + H(+) = FAD + diphosphate</text>
        <dbReference type="Rhea" id="RHEA:17237"/>
        <dbReference type="ChEBI" id="CHEBI:15378"/>
        <dbReference type="ChEBI" id="CHEBI:30616"/>
        <dbReference type="ChEBI" id="CHEBI:33019"/>
        <dbReference type="ChEBI" id="CHEBI:57692"/>
        <dbReference type="ChEBI" id="CHEBI:58210"/>
        <dbReference type="EC" id="2.7.7.2"/>
    </reaction>
</comment>
<comment type="cofactor">
    <cofactor evidence="3 4">
        <name>Mg(2+)</name>
        <dbReference type="ChEBI" id="CHEBI:18420"/>
    </cofactor>
</comment>
<comment type="biophysicochemical properties">
    <kinetics>
        <KM evidence="3 4">1.5 uM for FMN</KM>
        <KM evidence="3 4">0.36 uM for FMN (isoform 2)</KM>
        <Vmax evidence="3 4">6.1 nmol/min/mg enzyme</Vmax>
        <Vmax evidence="3 4">3.9 nmol/min/mg enzyme (isoform 2)</Vmax>
    </kinetics>
</comment>
<comment type="pathway">
    <text>Cofactor biosynthesis; FAD biosynthesis; FAD from FMN: step 1/1.</text>
</comment>
<comment type="interaction">
    <interactant intactId="EBI-742815">
        <id>Q8NFF5</id>
    </interactant>
    <interactant intactId="EBI-742815">
        <id>Q8NFF5</id>
        <label>FLAD1</label>
    </interactant>
    <organismsDiffer>false</organismsDiffer>
    <experiments>3</experiments>
</comment>
<comment type="interaction">
    <interactant intactId="EBI-742815">
        <id>Q8NFF5</id>
    </interactant>
    <interactant intactId="EBI-307352">
        <id>Q04864</id>
        <label>REL</label>
    </interactant>
    <organismsDiffer>false</organismsDiffer>
    <experiments>3</experiments>
</comment>
<comment type="interaction">
    <interactant intactId="EBI-742815">
        <id>Q8NFF5</id>
    </interactant>
    <interactant intactId="EBI-727004">
        <id>O00560</id>
        <label>SDCBP</label>
    </interactant>
    <organismsDiffer>false</organismsDiffer>
    <experiments>4</experiments>
</comment>
<comment type="interaction">
    <interactant intactId="EBI-742815">
        <id>Q8NFF5</id>
    </interactant>
    <interactant intactId="EBI-533224">
        <id>P15884</id>
        <label>TCF4</label>
    </interactant>
    <organismsDiffer>false</organismsDiffer>
    <experiments>3</experiments>
</comment>
<comment type="interaction">
    <interactant intactId="EBI-11526128">
        <id>Q8NFF5-2</id>
    </interactant>
    <interactant intactId="EBI-12298187">
        <id>Q7Z2E3-7</id>
        <label>APTX</label>
    </interactant>
    <organismsDiffer>false</organismsDiffer>
    <experiments>3</experiments>
</comment>
<comment type="interaction">
    <interactant intactId="EBI-11526128">
        <id>Q8NFF5-2</id>
    </interactant>
    <interactant intactId="EBI-12357161">
        <id>Q5SYC1</id>
        <label>CLVS2</label>
    </interactant>
    <organismsDiffer>false</organismsDiffer>
    <experiments>3</experiments>
</comment>
<comment type="interaction">
    <interactant intactId="EBI-11526128">
        <id>Q8NFF5-2</id>
    </interactant>
    <interactant intactId="EBI-350590">
        <id>Q9UNS2</id>
        <label>COPS3</label>
    </interactant>
    <organismsDiffer>false</organismsDiffer>
    <experiments>3</experiments>
</comment>
<comment type="interaction">
    <interactant intactId="EBI-11526128">
        <id>Q8NFF5-2</id>
    </interactant>
    <interactant intactId="EBI-10204806">
        <id>P29373</id>
        <label>CRABP2</label>
    </interactant>
    <organismsDiffer>false</organismsDiffer>
    <experiments>3</experiments>
</comment>
<comment type="interaction">
    <interactant intactId="EBI-11526128">
        <id>Q8NFF5-2</id>
    </interactant>
    <interactant intactId="EBI-346547">
        <id>P50570</id>
        <label>DNM2</label>
    </interactant>
    <organismsDiffer>false</organismsDiffer>
    <experiments>3</experiments>
</comment>
<comment type="interaction">
    <interactant intactId="EBI-11526128">
        <id>Q8NFF5-2</id>
    </interactant>
    <interactant intactId="EBI-11526128">
        <id>Q8NFF5-2</id>
        <label>FLAD1</label>
    </interactant>
    <organismsDiffer>false</organismsDiffer>
    <experiments>5</experiments>
</comment>
<comment type="interaction">
    <interactant intactId="EBI-11526128">
        <id>Q8NFF5-2</id>
    </interactant>
    <interactant intactId="EBI-11985629">
        <id>Q96JM7-2</id>
        <label>L3MBTL3</label>
    </interactant>
    <organismsDiffer>false</organismsDiffer>
    <experiments>3</experiments>
</comment>
<comment type="interaction">
    <interactant intactId="EBI-11526128">
        <id>Q8NFF5-2</id>
    </interactant>
    <interactant intactId="EBI-740897">
        <id>Q9GZT8</id>
        <label>NIF3L1</label>
    </interactant>
    <organismsDiffer>false</organismsDiffer>
    <experiments>3</experiments>
</comment>
<comment type="interaction">
    <interactant intactId="EBI-11526128">
        <id>Q8NFF5-2</id>
    </interactant>
    <interactant intactId="EBI-739759">
        <id>Q9NRG1</id>
        <label>PRTFDC1</label>
    </interactant>
    <organismsDiffer>false</organismsDiffer>
    <experiments>3</experiments>
</comment>
<comment type="interaction">
    <interactant intactId="EBI-11526128">
        <id>Q8NFF5-2</id>
    </interactant>
    <interactant intactId="EBI-10829018">
        <id>Q04864-2</id>
        <label>REL</label>
    </interactant>
    <organismsDiffer>false</organismsDiffer>
    <experiments>3</experiments>
</comment>
<comment type="interaction">
    <interactant intactId="EBI-11526128">
        <id>Q8NFF5-2</id>
    </interactant>
    <interactant intactId="EBI-740098">
        <id>P36406</id>
        <label>TRIM23</label>
    </interactant>
    <organismsDiffer>false</organismsDiffer>
    <experiments>3</experiments>
</comment>
<comment type="subcellular location">
    <molecule>Isoform 1</molecule>
    <subcellularLocation>
        <location evidence="5">Mitochondrion matrix</location>
    </subcellularLocation>
</comment>
<comment type="subcellular location">
    <molecule>Isoform 2</molecule>
    <subcellularLocation>
        <location>Cytoplasm</location>
    </subcellularLocation>
</comment>
<comment type="alternative products">
    <event type="alternative splicing"/>
    <isoform>
        <id>Q8NFF5-1</id>
        <name>1</name>
        <name evidence="9">FADS1</name>
        <sequence type="displayed"/>
    </isoform>
    <isoform>
        <id>Q8NFF5-2</id>
        <name>2</name>
        <name evidence="9">FADS2</name>
        <sequence type="described" ref="VSP_027947"/>
    </isoform>
    <isoform>
        <id>Q8NFF5-3</id>
        <name>3</name>
        <sequence type="described" ref="VSP_027947 VSP_027954"/>
    </isoform>
    <isoform>
        <id>Q8NFF5-4</id>
        <name>4</name>
        <sequence type="described" ref="VSP_027948 VSP_027949 VSP_027951 VSP_027952"/>
    </isoform>
    <isoform>
        <id>Q8NFF5-5</id>
        <name>5</name>
        <sequence type="described" ref="VSP_027948 VSP_027949 VSP_027950 VSP_027953"/>
    </isoform>
</comment>
<comment type="domain">
    <text>The molybdenum cofactor biosynthesis protein-like region may not be functional.</text>
</comment>
<comment type="disease" evidence="6">
    <disease id="DI-04783">
        <name>Lipid storage myopathy due to flavin adenine dinucleotide synthetase deficiency</name>
        <acronym>LSMFLAD</acronym>
        <description>An autosomal recessive, inborn error of metabolism characterized by variable mitochondrial dysfunction. Clinical features range from severe cardiac and respiratory insufficiency with onset in infancy and resulting in early death, to mild muscle weakness with onset in adulthood. Some patients show significant improvement with riboflavin treatment. Analysis of skeletal muscle show multiple mitochondrial respiratory chain deficiency and a lipid storage myopathy in most patients.</description>
        <dbReference type="MIM" id="255100"/>
    </disease>
    <text>The disease is caused by variants affecting the gene represented in this entry.</text>
</comment>
<comment type="similarity">
    <text evidence="11">In the N-terminal section; belongs to the MoaB/Mog family.</text>
</comment>
<comment type="similarity">
    <text evidence="11">In the C-terminal section; belongs to the PAPS reductase family. FAD1 subfamily.</text>
</comment>
<reference key="1">
    <citation type="journal article" date="2006" name="Biochem. Biophys. Res. Commun.">
        <title>Over-expression in Escherichia coli and characterization of two recombinant isoforms of human FAD synthetase.</title>
        <authorList>
            <person name="Brizio C."/>
            <person name="Galluccio M."/>
            <person name="Wait R."/>
            <person name="Torchetti E.M."/>
            <person name="Bafunno V."/>
            <person name="Accardi R."/>
            <person name="Gianazza E."/>
            <person name="Indiveri C."/>
            <person name="Barile M."/>
        </authorList>
    </citation>
    <scope>NUCLEOTIDE SEQUENCE [MRNA] (ISOFORM 1)</scope>
    <scope>ALTERNATIVE SPLICING (ISOFORM 2)</scope>
    <scope>CATALYTIC ACTIVITY</scope>
    <scope>BIOPHYSICOCHEMICAL PROPERTIES</scope>
    <scope>COFACTOR</scope>
    <scope>FUNCTION</scope>
    <source>
        <tissue>Skin</tissue>
    </source>
</reference>
<reference key="2">
    <citation type="submission" date="2002-02" db="EMBL/GenBank/DDBJ databases">
        <title>Cloning, expression and characterization of a human FAD synthetase.</title>
        <authorList>
            <person name="Fischer M.J."/>
            <person name="Kempter K."/>
            <person name="Bacher A."/>
        </authorList>
    </citation>
    <scope>NUCLEOTIDE SEQUENCE [MRNA] (ISOFORM 2)</scope>
    <source>
        <tissue>Liver</tissue>
    </source>
</reference>
<reference key="3">
    <citation type="submission" date="2002-06" db="EMBL/GenBank/DDBJ databases">
        <authorList>
            <person name="Chen X.G."/>
            <person name="Li Y."/>
        </authorList>
    </citation>
    <scope>NUCLEOTIDE SEQUENCE [MRNA] (ISOFORM 1)</scope>
    <source>
        <tissue>Skin</tissue>
    </source>
</reference>
<reference key="4">
    <citation type="journal article" date="2004" name="Proc. Natl. Acad. Sci. U.S.A.">
        <title>Large-scale cDNA transfection screening for genes related to cancer development and progression.</title>
        <authorList>
            <person name="Wan D."/>
            <person name="Gong Y."/>
            <person name="Qin W."/>
            <person name="Zhang P."/>
            <person name="Li J."/>
            <person name="Wei L."/>
            <person name="Zhou X."/>
            <person name="Li H."/>
            <person name="Qiu X."/>
            <person name="Zhong F."/>
            <person name="He L."/>
            <person name="Yu J."/>
            <person name="Yao G."/>
            <person name="Jiang H."/>
            <person name="Qian L."/>
            <person name="Yu Y."/>
            <person name="Shu H."/>
            <person name="Chen X."/>
            <person name="Xu H."/>
            <person name="Guo M."/>
            <person name="Pan Z."/>
            <person name="Chen Y."/>
            <person name="Ge C."/>
            <person name="Yang S."/>
            <person name="Gu J."/>
        </authorList>
    </citation>
    <scope>NUCLEOTIDE SEQUENCE [LARGE SCALE MRNA] (ISOFORM 4)</scope>
</reference>
<reference key="5">
    <citation type="journal article" date="2006" name="Nature">
        <title>The DNA sequence and biological annotation of human chromosome 1.</title>
        <authorList>
            <person name="Gregory S.G."/>
            <person name="Barlow K.F."/>
            <person name="McLay K.E."/>
            <person name="Kaul R."/>
            <person name="Swarbreck D."/>
            <person name="Dunham A."/>
            <person name="Scott C.E."/>
            <person name="Howe K.L."/>
            <person name="Woodfine K."/>
            <person name="Spencer C.C.A."/>
            <person name="Jones M.C."/>
            <person name="Gillson C."/>
            <person name="Searle S."/>
            <person name="Zhou Y."/>
            <person name="Kokocinski F."/>
            <person name="McDonald L."/>
            <person name="Evans R."/>
            <person name="Phillips K."/>
            <person name="Atkinson A."/>
            <person name="Cooper R."/>
            <person name="Jones C."/>
            <person name="Hall R.E."/>
            <person name="Andrews T.D."/>
            <person name="Lloyd C."/>
            <person name="Ainscough R."/>
            <person name="Almeida J.P."/>
            <person name="Ambrose K.D."/>
            <person name="Anderson F."/>
            <person name="Andrew R.W."/>
            <person name="Ashwell R.I.S."/>
            <person name="Aubin K."/>
            <person name="Babbage A.K."/>
            <person name="Bagguley C.L."/>
            <person name="Bailey J."/>
            <person name="Beasley H."/>
            <person name="Bethel G."/>
            <person name="Bird C.P."/>
            <person name="Bray-Allen S."/>
            <person name="Brown J.Y."/>
            <person name="Brown A.J."/>
            <person name="Buckley D."/>
            <person name="Burton J."/>
            <person name="Bye J."/>
            <person name="Carder C."/>
            <person name="Chapman J.C."/>
            <person name="Clark S.Y."/>
            <person name="Clarke G."/>
            <person name="Clee C."/>
            <person name="Cobley V."/>
            <person name="Collier R.E."/>
            <person name="Corby N."/>
            <person name="Coville G.J."/>
            <person name="Davies J."/>
            <person name="Deadman R."/>
            <person name="Dunn M."/>
            <person name="Earthrowl M."/>
            <person name="Ellington A.G."/>
            <person name="Errington H."/>
            <person name="Frankish A."/>
            <person name="Frankland J."/>
            <person name="French L."/>
            <person name="Garner P."/>
            <person name="Garnett J."/>
            <person name="Gay L."/>
            <person name="Ghori M.R.J."/>
            <person name="Gibson R."/>
            <person name="Gilby L.M."/>
            <person name="Gillett W."/>
            <person name="Glithero R.J."/>
            <person name="Grafham D.V."/>
            <person name="Griffiths C."/>
            <person name="Griffiths-Jones S."/>
            <person name="Grocock R."/>
            <person name="Hammond S."/>
            <person name="Harrison E.S.I."/>
            <person name="Hart E."/>
            <person name="Haugen E."/>
            <person name="Heath P.D."/>
            <person name="Holmes S."/>
            <person name="Holt K."/>
            <person name="Howden P.J."/>
            <person name="Hunt A.R."/>
            <person name="Hunt S.E."/>
            <person name="Hunter G."/>
            <person name="Isherwood J."/>
            <person name="James R."/>
            <person name="Johnson C."/>
            <person name="Johnson D."/>
            <person name="Joy A."/>
            <person name="Kay M."/>
            <person name="Kershaw J.K."/>
            <person name="Kibukawa M."/>
            <person name="Kimberley A.M."/>
            <person name="King A."/>
            <person name="Knights A.J."/>
            <person name="Lad H."/>
            <person name="Laird G."/>
            <person name="Lawlor S."/>
            <person name="Leongamornlert D.A."/>
            <person name="Lloyd D.M."/>
            <person name="Loveland J."/>
            <person name="Lovell J."/>
            <person name="Lush M.J."/>
            <person name="Lyne R."/>
            <person name="Martin S."/>
            <person name="Mashreghi-Mohammadi M."/>
            <person name="Matthews L."/>
            <person name="Matthews N.S.W."/>
            <person name="McLaren S."/>
            <person name="Milne S."/>
            <person name="Mistry S."/>
            <person name="Moore M.J.F."/>
            <person name="Nickerson T."/>
            <person name="O'Dell C.N."/>
            <person name="Oliver K."/>
            <person name="Palmeiri A."/>
            <person name="Palmer S.A."/>
            <person name="Parker A."/>
            <person name="Patel D."/>
            <person name="Pearce A.V."/>
            <person name="Peck A.I."/>
            <person name="Pelan S."/>
            <person name="Phelps K."/>
            <person name="Phillimore B.J."/>
            <person name="Plumb R."/>
            <person name="Rajan J."/>
            <person name="Raymond C."/>
            <person name="Rouse G."/>
            <person name="Saenphimmachak C."/>
            <person name="Sehra H.K."/>
            <person name="Sheridan E."/>
            <person name="Shownkeen R."/>
            <person name="Sims S."/>
            <person name="Skuce C.D."/>
            <person name="Smith M."/>
            <person name="Steward C."/>
            <person name="Subramanian S."/>
            <person name="Sycamore N."/>
            <person name="Tracey A."/>
            <person name="Tromans A."/>
            <person name="Van Helmond Z."/>
            <person name="Wall M."/>
            <person name="Wallis J.M."/>
            <person name="White S."/>
            <person name="Whitehead S.L."/>
            <person name="Wilkinson J.E."/>
            <person name="Willey D.L."/>
            <person name="Williams H."/>
            <person name="Wilming L."/>
            <person name="Wray P.W."/>
            <person name="Wu Z."/>
            <person name="Coulson A."/>
            <person name="Vaudin M."/>
            <person name="Sulston J.E."/>
            <person name="Durbin R.M."/>
            <person name="Hubbard T."/>
            <person name="Wooster R."/>
            <person name="Dunham I."/>
            <person name="Carter N.P."/>
            <person name="McVean G."/>
            <person name="Ross M.T."/>
            <person name="Harrow J."/>
            <person name="Olson M.V."/>
            <person name="Beck S."/>
            <person name="Rogers J."/>
            <person name="Bentley D.R."/>
        </authorList>
    </citation>
    <scope>NUCLEOTIDE SEQUENCE [LARGE SCALE GENOMIC DNA]</scope>
</reference>
<reference key="6">
    <citation type="submission" date="2006-12" db="EMBL/GenBank/DDBJ databases">
        <authorList>
            <person name="Mural R.J."/>
            <person name="Istrail S."/>
            <person name="Sutton G.G."/>
            <person name="Florea L."/>
            <person name="Halpern A.L."/>
            <person name="Mobarry C.M."/>
            <person name="Lippert R."/>
            <person name="Walenz B."/>
            <person name="Shatkay H."/>
            <person name="Dew I."/>
            <person name="Miller J.R."/>
            <person name="Flanigan M.J."/>
            <person name="Edwards N.J."/>
            <person name="Bolanos R."/>
            <person name="Fasulo D."/>
            <person name="Halldorsson B.V."/>
            <person name="Hannenhalli S."/>
            <person name="Turner R."/>
            <person name="Yooseph S."/>
            <person name="Lu F."/>
            <person name="Nusskern D.R."/>
            <person name="Shue B.C."/>
            <person name="Zheng X.H."/>
            <person name="Zhong F."/>
            <person name="Delcher A.L."/>
            <person name="Huson D.H."/>
            <person name="Kravitz S.A."/>
            <person name="Mouchard L."/>
            <person name="Reinert K."/>
            <person name="Remington K.A."/>
            <person name="Clark A.G."/>
            <person name="Waterman M.S."/>
            <person name="Eichler E.E."/>
            <person name="Adams M.D."/>
            <person name="Hunkapiller M.W."/>
            <person name="Myers E.W."/>
            <person name="Venter J.C."/>
        </authorList>
    </citation>
    <scope>NUCLEOTIDE SEQUENCE [LARGE SCALE GENOMIC DNA]</scope>
</reference>
<reference key="7">
    <citation type="journal article" date="2004" name="Genome Res.">
        <title>The status, quality, and expansion of the NIH full-length cDNA project: the Mammalian Gene Collection (MGC).</title>
        <authorList>
            <consortium name="The MGC Project Team"/>
        </authorList>
    </citation>
    <scope>NUCLEOTIDE SEQUENCE [LARGE SCALE MRNA] (ISOFORMS 2 AND 3)</scope>
    <scope>NUCLEOTIDE SEQUENCE [LARGE SCALE MRNA] OF 10-587 (ISOFORM 5)</scope>
    <scope>NUCLEOTIDE SEQUENCE [LARGE SCALE MRNA] OF 256-587 (ISOFORM 1)</scope>
    <source>
        <tissue>Brain</tissue>
        <tissue>Colon</tissue>
        <tissue>Placenta</tissue>
        <tissue>Skin</tissue>
    </source>
</reference>
<reference key="8">
    <citation type="journal article" date="1997" name="Genome Res.">
        <title>Large-scale concatenation cDNA sequencing.</title>
        <authorList>
            <person name="Yu W."/>
            <person name="Andersson B."/>
            <person name="Worley K.C."/>
            <person name="Muzny D.M."/>
            <person name="Ding Y."/>
            <person name="Liu W."/>
            <person name="Ricafrente J.Y."/>
            <person name="Wentland M.A."/>
            <person name="Lennon G."/>
            <person name="Gibbs R.A."/>
        </authorList>
    </citation>
    <scope>NUCLEOTIDE SEQUENCE [LARGE SCALE MRNA] OF 151-587 (ISOFORM 1)</scope>
    <source>
        <tissue>Brain</tissue>
    </source>
</reference>
<reference key="9">
    <citation type="journal article" date="2007" name="Protein Expr. Purif.">
        <title>Over-expression in Escherichia coli, purification and characterization of isoform 2 of human FAD synthetase.</title>
        <authorList>
            <person name="Galluccio M."/>
            <person name="Brizio C."/>
            <person name="Torchetti E.M."/>
            <person name="Ferranti P."/>
            <person name="Gianazza E."/>
            <person name="Indiveri C."/>
            <person name="Barile M."/>
        </authorList>
    </citation>
    <scope>BIOPHYSICOCHEMICAL PROPERTIES</scope>
    <scope>COFACTOR</scope>
</reference>
<reference key="10">
    <citation type="journal article" date="2008" name="Mol. Cell">
        <title>Kinase-selective enrichment enables quantitative phosphoproteomics of the kinome across the cell cycle.</title>
        <authorList>
            <person name="Daub H."/>
            <person name="Olsen J.V."/>
            <person name="Bairlein M."/>
            <person name="Gnad F."/>
            <person name="Oppermann F.S."/>
            <person name="Korner R."/>
            <person name="Greff Z."/>
            <person name="Keri G."/>
            <person name="Stemmann O."/>
            <person name="Mann M."/>
        </authorList>
    </citation>
    <scope>PHOSPHORYLATION [LARGE SCALE ANALYSIS] AT SER-106 AND SER-563</scope>
    <scope>IDENTIFICATION BY MASS SPECTROMETRY [LARGE SCALE ANALYSIS]</scope>
    <source>
        <tissue>Cervix carcinoma</tissue>
    </source>
</reference>
<reference key="11">
    <citation type="journal article" date="2008" name="Proc. Natl. Acad. Sci. U.S.A.">
        <title>A quantitative atlas of mitotic phosphorylation.</title>
        <authorList>
            <person name="Dephoure N."/>
            <person name="Zhou C."/>
            <person name="Villen J."/>
            <person name="Beausoleil S.A."/>
            <person name="Bakalarski C.E."/>
            <person name="Elledge S.J."/>
            <person name="Gygi S.P."/>
        </authorList>
    </citation>
    <scope>PHOSPHORYLATION [LARGE SCALE ANALYSIS] AT SER-106</scope>
    <scope>IDENTIFICATION BY MASS SPECTROMETRY [LARGE SCALE ANALYSIS]</scope>
    <source>
        <tissue>Cervix carcinoma</tissue>
    </source>
</reference>
<reference key="12">
    <citation type="journal article" date="2009" name="Mol. Cell. Proteomics">
        <title>Large-scale proteomics analysis of the human kinome.</title>
        <authorList>
            <person name="Oppermann F.S."/>
            <person name="Gnad F."/>
            <person name="Olsen J.V."/>
            <person name="Hornberger R."/>
            <person name="Greff Z."/>
            <person name="Keri G."/>
            <person name="Mann M."/>
            <person name="Daub H."/>
        </authorList>
    </citation>
    <scope>PHOSPHORYLATION [LARGE SCALE ANALYSIS] AT SER-563</scope>
    <scope>IDENTIFICATION BY MASS SPECTROMETRY [LARGE SCALE ANALYSIS]</scope>
</reference>
<reference key="13">
    <citation type="journal article" date="2010" name="Mitochondrion">
        <title>Mitochondrial localization of human FAD synthetase isoform 1.</title>
        <authorList>
            <person name="Torchetti E.M."/>
            <person name="Brizio C."/>
            <person name="Colella M."/>
            <person name="Galluccio M."/>
            <person name="Giancaspero T.A."/>
            <person name="Indiveri C."/>
            <person name="Roberti M."/>
            <person name="Barile M."/>
        </authorList>
    </citation>
    <scope>SUBCELLULAR LOCATION</scope>
</reference>
<reference key="14">
    <citation type="journal article" date="2011" name="BMC Syst. Biol.">
        <title>Initial characterization of the human central proteome.</title>
        <authorList>
            <person name="Burkard T.R."/>
            <person name="Planyavsky M."/>
            <person name="Kaupe I."/>
            <person name="Breitwieser F.P."/>
            <person name="Buerckstuemmer T."/>
            <person name="Bennett K.L."/>
            <person name="Superti-Furga G."/>
            <person name="Colinge J."/>
        </authorList>
    </citation>
    <scope>IDENTIFICATION BY MASS SPECTROMETRY [LARGE SCALE ANALYSIS]</scope>
</reference>
<reference key="15">
    <citation type="journal article" date="2013" name="J. Proteome Res.">
        <title>Toward a comprehensive characterization of a human cancer cell phosphoproteome.</title>
        <authorList>
            <person name="Zhou H."/>
            <person name="Di Palma S."/>
            <person name="Preisinger C."/>
            <person name="Peng M."/>
            <person name="Polat A.N."/>
            <person name="Heck A.J."/>
            <person name="Mohammed S."/>
        </authorList>
    </citation>
    <scope>PHOSPHORYLATION [LARGE SCALE ANALYSIS] AT SER-563</scope>
    <scope>IDENTIFICATION BY MASS SPECTROMETRY [LARGE SCALE ANALYSIS]</scope>
    <source>
        <tissue>Erythroleukemia</tissue>
    </source>
</reference>
<reference key="16">
    <citation type="journal article" date="2014" name="J. Proteomics">
        <title>An enzyme assisted RP-RPLC approach for in-depth analysis of human liver phosphoproteome.</title>
        <authorList>
            <person name="Bian Y."/>
            <person name="Song C."/>
            <person name="Cheng K."/>
            <person name="Dong M."/>
            <person name="Wang F."/>
            <person name="Huang J."/>
            <person name="Sun D."/>
            <person name="Wang L."/>
            <person name="Ye M."/>
            <person name="Zou H."/>
        </authorList>
    </citation>
    <scope>IDENTIFICATION BY MASS SPECTROMETRY [LARGE SCALE ANALYSIS]</scope>
    <source>
        <tissue>Liver</tissue>
    </source>
</reference>
<reference key="17">
    <citation type="journal article" date="2016" name="Am. J. Hum. Genet.">
        <title>Riboflavin-responsive and -non-responsive mutations in FAD synthase cause multiple Acyl-CoA dehydrogenase and combined respiratory-chain deficiency.</title>
        <authorList>
            <person name="Olsen R.K."/>
            <person name="Konarikova E."/>
            <person name="Giancaspero T.A."/>
            <person name="Mosegaard S."/>
            <person name="Boczonadi V."/>
            <person name="Matakovic L."/>
            <person name="Veauville-Merllie A."/>
            <person name="Terrile C."/>
            <person name="Schwarzmayr T."/>
            <person name="Haack T.B."/>
            <person name="Auranen M."/>
            <person name="Leone P."/>
            <person name="Galluccio M."/>
            <person name="Imbard A."/>
            <person name="Gutierrez-Rios P."/>
            <person name="Palmfeldt J."/>
            <person name="Graf E."/>
            <person name="Vianey-Saban C."/>
            <person name="Oppenheim M."/>
            <person name="Schiff M."/>
            <person name="Pichard S."/>
            <person name="Rigal O."/>
            <person name="Pyle A."/>
            <person name="Chinnery P.F."/>
            <person name="Konstantopoulou V."/>
            <person name="Moeslinger D."/>
            <person name="Feichtinger R.G."/>
            <person name="Talim B."/>
            <person name="Topaloglu H."/>
            <person name="Coskun T."/>
            <person name="Gucer S."/>
            <person name="Botta A."/>
            <person name="Pegoraro E."/>
            <person name="Malena A."/>
            <person name="Vergani L."/>
            <person name="Mazza D."/>
            <person name="Zollino M."/>
            <person name="Ghezzi D."/>
            <person name="Acquaviva C."/>
            <person name="Tyni T."/>
            <person name="Boneh A."/>
            <person name="Meitinger T."/>
            <person name="Strom T.M."/>
            <person name="Gregersen N."/>
            <person name="Mayr J.A."/>
            <person name="Horvath R."/>
            <person name="Barile M."/>
            <person name="Prokisch H."/>
        </authorList>
    </citation>
    <scope>INVOLVEMENT IN LSMFLAD</scope>
    <scope>VARIANT LSMFLAD CYS-530 (ISOFORM 2)</scope>
    <scope>CHARACTERIZATION OF VARIANT LSMFLAD CYS-530 (ISOFORM 2)</scope>
    <scope>VARIANT LEU-107</scope>
    <scope>FUNCTION</scope>
</reference>
<name>FAD1_HUMAN</name>
<keyword id="KW-0002">3D-structure</keyword>
<keyword id="KW-0007">Acetylation</keyword>
<keyword id="KW-0025">Alternative splicing</keyword>
<keyword id="KW-0067">ATP-binding</keyword>
<keyword id="KW-0963">Cytoplasm</keyword>
<keyword id="KW-0225">Disease variant</keyword>
<keyword id="KW-0274">FAD</keyword>
<keyword id="KW-0285">Flavoprotein</keyword>
<keyword id="KW-0288">FMN</keyword>
<keyword id="KW-0496">Mitochondrion</keyword>
<keyword id="KW-0547">Nucleotide-binding</keyword>
<keyword id="KW-0548">Nucleotidyltransferase</keyword>
<keyword id="KW-0597">Phosphoprotein</keyword>
<keyword id="KW-1274">Primary mitochondrial disease</keyword>
<keyword id="KW-1267">Proteomics identification</keyword>
<keyword id="KW-1185">Reference proteome</keyword>
<keyword id="KW-0808">Transferase</keyword>
<keyword id="KW-0809">Transit peptide</keyword>
<gene>
    <name type="primary">FLAD1</name>
    <name type="ORF">PP591</name>
</gene>
<sequence length="587" mass="65266">MGWDLGTRLFQRQEQRSRLSRIWLEKTRVFLEGSTRTPALPHCLFWLLQVPSTQDPLFPGYGPQCPVDLAGPPCLRPLFGGLGGYWRALQRGREGRTMTSRASELSPGRSVTAGIIIVGDEILKGHTQDTNTFFLCRTLRSLGVQVCRVSVVPDEVATIAAEVTSFSNRFTHVLTAGGIGPTHDDVTFEAVAQAFGDELKPHPKLEAATKALGGEGWEKLSLVPSSARLHYGTDPCTGQPFRFPLVSVRNVYLFPGIPELLRRVLEGMKGLFQNPAVQFHSKELYVAADEASIAPILAEAQAHFGRRLGLGSYPDWGSNYYQVKLTLDSEEEGPLEECLAYLTARLPQGSLVPYMPNAVEQASEAVYKLAESGSSLGKKVAGALQTIETSLAQYSLTQLCVGFNGGKDCTALLHLFHAAVQRKLPDVPNPLQILYIRSISPFPELEQFLQDTIKRYNLQMLEAEGSMKQALGELQARHPQLEAVLMGTRRTDPYSCSLCPFSPTDPGWPAFMRINPLLDWTYRDIWDFLRQLFVPYCILYDRGYTSLGSRENTVRNPALKCLSPGGHPTYRPAYLLENEEEERNSRT</sequence>